<protein>
    <recommendedName>
        <fullName>Glycine--tRNA ligase beta subunit</fullName>
        <ecNumber>6.1.1.14</ecNumber>
    </recommendedName>
    <alternativeName>
        <fullName>Glycyl-tRNA synthetase beta subunit</fullName>
        <shortName>GlyRS</shortName>
    </alternativeName>
</protein>
<reference key="1">
    <citation type="journal article" date="1996" name="Microbiology">
        <title>Systematic sequencing of the 283 kb 210 degrees-232 degrees region of the Bacillus subtilis genome containing the skin element and many sporulation genes.</title>
        <authorList>
            <person name="Mizuno M."/>
            <person name="Masuda S."/>
            <person name="Takemaru K."/>
            <person name="Hosono S."/>
            <person name="Sato T."/>
            <person name="Takeuchi M."/>
            <person name="Kobayashi Y."/>
        </authorList>
    </citation>
    <scope>NUCLEOTIDE SEQUENCE [GENOMIC DNA]</scope>
    <source>
        <strain>168 / JH642</strain>
    </source>
</reference>
<reference key="2">
    <citation type="journal article" date="1997" name="Nature">
        <title>The complete genome sequence of the Gram-positive bacterium Bacillus subtilis.</title>
        <authorList>
            <person name="Kunst F."/>
            <person name="Ogasawara N."/>
            <person name="Moszer I."/>
            <person name="Albertini A.M."/>
            <person name="Alloni G."/>
            <person name="Azevedo V."/>
            <person name="Bertero M.G."/>
            <person name="Bessieres P."/>
            <person name="Bolotin A."/>
            <person name="Borchert S."/>
            <person name="Borriss R."/>
            <person name="Boursier L."/>
            <person name="Brans A."/>
            <person name="Braun M."/>
            <person name="Brignell S.C."/>
            <person name="Bron S."/>
            <person name="Brouillet S."/>
            <person name="Bruschi C.V."/>
            <person name="Caldwell B."/>
            <person name="Capuano V."/>
            <person name="Carter N.M."/>
            <person name="Choi S.-K."/>
            <person name="Codani J.-J."/>
            <person name="Connerton I.F."/>
            <person name="Cummings N.J."/>
            <person name="Daniel R.A."/>
            <person name="Denizot F."/>
            <person name="Devine K.M."/>
            <person name="Duesterhoeft A."/>
            <person name="Ehrlich S.D."/>
            <person name="Emmerson P.T."/>
            <person name="Entian K.-D."/>
            <person name="Errington J."/>
            <person name="Fabret C."/>
            <person name="Ferrari E."/>
            <person name="Foulger D."/>
            <person name="Fritz C."/>
            <person name="Fujita M."/>
            <person name="Fujita Y."/>
            <person name="Fuma S."/>
            <person name="Galizzi A."/>
            <person name="Galleron N."/>
            <person name="Ghim S.-Y."/>
            <person name="Glaser P."/>
            <person name="Goffeau A."/>
            <person name="Golightly E.J."/>
            <person name="Grandi G."/>
            <person name="Guiseppi G."/>
            <person name="Guy B.J."/>
            <person name="Haga K."/>
            <person name="Haiech J."/>
            <person name="Harwood C.R."/>
            <person name="Henaut A."/>
            <person name="Hilbert H."/>
            <person name="Holsappel S."/>
            <person name="Hosono S."/>
            <person name="Hullo M.-F."/>
            <person name="Itaya M."/>
            <person name="Jones L.-M."/>
            <person name="Joris B."/>
            <person name="Karamata D."/>
            <person name="Kasahara Y."/>
            <person name="Klaerr-Blanchard M."/>
            <person name="Klein C."/>
            <person name="Kobayashi Y."/>
            <person name="Koetter P."/>
            <person name="Koningstein G."/>
            <person name="Krogh S."/>
            <person name="Kumano M."/>
            <person name="Kurita K."/>
            <person name="Lapidus A."/>
            <person name="Lardinois S."/>
            <person name="Lauber J."/>
            <person name="Lazarevic V."/>
            <person name="Lee S.-M."/>
            <person name="Levine A."/>
            <person name="Liu H."/>
            <person name="Masuda S."/>
            <person name="Mauel C."/>
            <person name="Medigue C."/>
            <person name="Medina N."/>
            <person name="Mellado R.P."/>
            <person name="Mizuno M."/>
            <person name="Moestl D."/>
            <person name="Nakai S."/>
            <person name="Noback M."/>
            <person name="Noone D."/>
            <person name="O'Reilly M."/>
            <person name="Ogawa K."/>
            <person name="Ogiwara A."/>
            <person name="Oudega B."/>
            <person name="Park S.-H."/>
            <person name="Parro V."/>
            <person name="Pohl T.M."/>
            <person name="Portetelle D."/>
            <person name="Porwollik S."/>
            <person name="Prescott A.M."/>
            <person name="Presecan E."/>
            <person name="Pujic P."/>
            <person name="Purnelle B."/>
            <person name="Rapoport G."/>
            <person name="Rey M."/>
            <person name="Reynolds S."/>
            <person name="Rieger M."/>
            <person name="Rivolta C."/>
            <person name="Rocha E."/>
            <person name="Roche B."/>
            <person name="Rose M."/>
            <person name="Sadaie Y."/>
            <person name="Sato T."/>
            <person name="Scanlan E."/>
            <person name="Schleich S."/>
            <person name="Schroeter R."/>
            <person name="Scoffone F."/>
            <person name="Sekiguchi J."/>
            <person name="Sekowska A."/>
            <person name="Seror S.J."/>
            <person name="Serror P."/>
            <person name="Shin B.-S."/>
            <person name="Soldo B."/>
            <person name="Sorokin A."/>
            <person name="Tacconi E."/>
            <person name="Takagi T."/>
            <person name="Takahashi H."/>
            <person name="Takemaru K."/>
            <person name="Takeuchi M."/>
            <person name="Tamakoshi A."/>
            <person name="Tanaka T."/>
            <person name="Terpstra P."/>
            <person name="Tognoni A."/>
            <person name="Tosato V."/>
            <person name="Uchiyama S."/>
            <person name="Vandenbol M."/>
            <person name="Vannier F."/>
            <person name="Vassarotti A."/>
            <person name="Viari A."/>
            <person name="Wambutt R."/>
            <person name="Wedler E."/>
            <person name="Wedler H."/>
            <person name="Weitzenegger T."/>
            <person name="Winters P."/>
            <person name="Wipat A."/>
            <person name="Yamamoto H."/>
            <person name="Yamane K."/>
            <person name="Yasumoto K."/>
            <person name="Yata K."/>
            <person name="Yoshida K."/>
            <person name="Yoshikawa H.-F."/>
            <person name="Zumstein E."/>
            <person name="Yoshikawa H."/>
            <person name="Danchin A."/>
        </authorList>
    </citation>
    <scope>NUCLEOTIDE SEQUENCE [LARGE SCALE GENOMIC DNA]</scope>
    <source>
        <strain>168</strain>
    </source>
</reference>
<reference key="3">
    <citation type="journal article" date="2009" name="Microbiology">
        <title>From a consortium sequence to a unified sequence: the Bacillus subtilis 168 reference genome a decade later.</title>
        <authorList>
            <person name="Barbe V."/>
            <person name="Cruveiller S."/>
            <person name="Kunst F."/>
            <person name="Lenoble P."/>
            <person name="Meurice G."/>
            <person name="Sekowska A."/>
            <person name="Vallenet D."/>
            <person name="Wang T."/>
            <person name="Moszer I."/>
            <person name="Medigue C."/>
            <person name="Danchin A."/>
        </authorList>
    </citation>
    <scope>SEQUENCE REVISION TO 481 AND 611</scope>
</reference>
<name>SYGB_BACSU</name>
<feature type="chain" id="PRO_0000072894" description="Glycine--tRNA ligase beta subunit">
    <location>
        <begin position="1"/>
        <end position="679"/>
    </location>
</feature>
<feature type="sequence conflict" description="In Ref. 1; BAA12485." evidence="2" ref="1">
    <original>R</original>
    <variation>P</variation>
    <location>
        <position position="481"/>
    </location>
</feature>
<feature type="sequence conflict" description="In Ref. 1; BAA12485." evidence="2" ref="1">
    <original>Q</original>
    <variation>E</variation>
    <location>
        <position position="611"/>
    </location>
</feature>
<organism>
    <name type="scientific">Bacillus subtilis (strain 168)</name>
    <dbReference type="NCBI Taxonomy" id="224308"/>
    <lineage>
        <taxon>Bacteria</taxon>
        <taxon>Bacillati</taxon>
        <taxon>Bacillota</taxon>
        <taxon>Bacilli</taxon>
        <taxon>Bacillales</taxon>
        <taxon>Bacillaceae</taxon>
        <taxon>Bacillus</taxon>
    </lineage>
</organism>
<keyword id="KW-0030">Aminoacyl-tRNA synthetase</keyword>
<keyword id="KW-0067">ATP-binding</keyword>
<keyword id="KW-0963">Cytoplasm</keyword>
<keyword id="KW-0436">Ligase</keyword>
<keyword id="KW-0547">Nucleotide-binding</keyword>
<keyword id="KW-0648">Protein biosynthesis</keyword>
<keyword id="KW-1185">Reference proteome</keyword>
<accession>P54381</accession>
<sequence>MSKQDLLLEIGLEEMPARFLNESMVQLGDKLTGWLKEKNITHGEVKLFNTPRRLAVFVKDVAEKQDDIKEEAKGPAKKIALDADGNWTKAAIGFSKGQGANVEDLYIKEVKGIEYVFVQKFQAGQETKSLLPELSGLITSLHFPKNMRWGNEDLRYIRPIKWIVALFGQDVIPFSITNVESGRTTQGHRFLGHEVSIESPSAYEEQLKGQHVIADPSVRKQMIQSQLETMAAENNWSIPVDEDLLDEVNHLVEYPTALYGSFESEFLSIPEEVLVTTMKEHQRYFPVKDKNGDLLPHFITVRNGNSHAIENVARGNEKVLRARLSDASFFYKEDQKLNIDANVKKLENIVFHEELGSLADKVRRVTSIAEKLAVRLQADEDTLKHVKRAAEISKFDLVTHMIYEFPELQGIMGEKYARMLGEDEAVAAAVNEHYMPRSAGGETPSTFTGAVVAMADKLDTIASFFSIGVIPTGSQDPYGLRRQASGIVAILLDRNWGISFEELLTFVQTDKENELLDFFTQRLKYVLNAEQIRHDVIDAVLESSELEPYSALHKAQVLEQKLGAPGFKETAEALGRVISISKKGVRGDIQPDLFENEYEAKLFDAYQTAKQNLQENFSKKDYEAALASLAALKEPIDAYFDHTMVIADNESLKANRLAQMVSLADEIKSFANMNALIVK</sequence>
<proteinExistence type="inferred from homology"/>
<gene>
    <name type="primary">glyS</name>
    <name type="synonym">yqfK</name>
    <name type="ordered locus">BSU25260</name>
</gene>
<comment type="catalytic activity">
    <reaction>
        <text>tRNA(Gly) + glycine + ATP = glycyl-tRNA(Gly) + AMP + diphosphate</text>
        <dbReference type="Rhea" id="RHEA:16013"/>
        <dbReference type="Rhea" id="RHEA-COMP:9664"/>
        <dbReference type="Rhea" id="RHEA-COMP:9683"/>
        <dbReference type="ChEBI" id="CHEBI:30616"/>
        <dbReference type="ChEBI" id="CHEBI:33019"/>
        <dbReference type="ChEBI" id="CHEBI:57305"/>
        <dbReference type="ChEBI" id="CHEBI:78442"/>
        <dbReference type="ChEBI" id="CHEBI:78522"/>
        <dbReference type="ChEBI" id="CHEBI:456215"/>
        <dbReference type="EC" id="6.1.1.14"/>
    </reaction>
</comment>
<comment type="subunit">
    <text>Tetramer of two alpha and two beta subunits.</text>
</comment>
<comment type="subcellular location">
    <subcellularLocation>
        <location evidence="1">Cytoplasm</location>
    </subcellularLocation>
</comment>
<comment type="similarity">
    <text evidence="2">Belongs to the class-II aminoacyl-tRNA synthetase family.</text>
</comment>
<dbReference type="EC" id="6.1.1.14"/>
<dbReference type="EMBL" id="D84432">
    <property type="protein sequence ID" value="BAA12485.1"/>
    <property type="molecule type" value="Genomic_DNA"/>
</dbReference>
<dbReference type="EMBL" id="AL009126">
    <property type="protein sequence ID" value="CAB14455.2"/>
    <property type="molecule type" value="Genomic_DNA"/>
</dbReference>
<dbReference type="PIR" id="B69636">
    <property type="entry name" value="B69636"/>
</dbReference>
<dbReference type="RefSeq" id="NP_390404.2">
    <property type="nucleotide sequence ID" value="NC_000964.3"/>
</dbReference>
<dbReference type="RefSeq" id="WP_003230059.1">
    <property type="nucleotide sequence ID" value="NZ_OZ025638.1"/>
</dbReference>
<dbReference type="SMR" id="P54381"/>
<dbReference type="FunCoup" id="P54381">
    <property type="interactions" value="508"/>
</dbReference>
<dbReference type="IntAct" id="P54381">
    <property type="interactions" value="1"/>
</dbReference>
<dbReference type="MINT" id="P54381"/>
<dbReference type="STRING" id="224308.BSU25260"/>
<dbReference type="PaxDb" id="224308-BSU25260"/>
<dbReference type="EnsemblBacteria" id="CAB14455">
    <property type="protein sequence ID" value="CAB14455"/>
    <property type="gene ID" value="BSU_25260"/>
</dbReference>
<dbReference type="GeneID" id="937887"/>
<dbReference type="KEGG" id="bsu:BSU25260"/>
<dbReference type="PATRIC" id="fig|224308.179.peg.2745"/>
<dbReference type="eggNOG" id="COG0751">
    <property type="taxonomic scope" value="Bacteria"/>
</dbReference>
<dbReference type="InParanoid" id="P54381"/>
<dbReference type="OrthoDB" id="9775440at2"/>
<dbReference type="PhylomeDB" id="P54381"/>
<dbReference type="BioCyc" id="BSUB:BSU25260-MONOMER"/>
<dbReference type="Proteomes" id="UP000001570">
    <property type="component" value="Chromosome"/>
</dbReference>
<dbReference type="GO" id="GO:0005829">
    <property type="term" value="C:cytosol"/>
    <property type="evidence" value="ECO:0000318"/>
    <property type="project" value="GO_Central"/>
</dbReference>
<dbReference type="GO" id="GO:0004814">
    <property type="term" value="F:arginine-tRNA ligase activity"/>
    <property type="evidence" value="ECO:0007669"/>
    <property type="project" value="InterPro"/>
</dbReference>
<dbReference type="GO" id="GO:0005524">
    <property type="term" value="F:ATP binding"/>
    <property type="evidence" value="ECO:0007669"/>
    <property type="project" value="UniProtKB-UniRule"/>
</dbReference>
<dbReference type="GO" id="GO:0004820">
    <property type="term" value="F:glycine-tRNA ligase activity"/>
    <property type="evidence" value="ECO:0007669"/>
    <property type="project" value="UniProtKB-UniRule"/>
</dbReference>
<dbReference type="GO" id="GO:0006420">
    <property type="term" value="P:arginyl-tRNA aminoacylation"/>
    <property type="evidence" value="ECO:0007669"/>
    <property type="project" value="InterPro"/>
</dbReference>
<dbReference type="GO" id="GO:0006426">
    <property type="term" value="P:glycyl-tRNA aminoacylation"/>
    <property type="evidence" value="ECO:0007669"/>
    <property type="project" value="UniProtKB-UniRule"/>
</dbReference>
<dbReference type="HAMAP" id="MF_00255">
    <property type="entry name" value="Gly_tRNA_synth_beta"/>
    <property type="match status" value="1"/>
</dbReference>
<dbReference type="InterPro" id="IPR008909">
    <property type="entry name" value="DALR_anticod-bd"/>
</dbReference>
<dbReference type="InterPro" id="IPR015944">
    <property type="entry name" value="Gly-tRNA-synth_bsu"/>
</dbReference>
<dbReference type="InterPro" id="IPR006194">
    <property type="entry name" value="Gly-tRNA-synth_heterodimer"/>
</dbReference>
<dbReference type="NCBIfam" id="TIGR00211">
    <property type="entry name" value="glyS"/>
    <property type="match status" value="1"/>
</dbReference>
<dbReference type="PANTHER" id="PTHR30075:SF2">
    <property type="entry name" value="GLYCINE--TRNA LIGASE, CHLOROPLASTIC_MITOCHONDRIAL 2"/>
    <property type="match status" value="1"/>
</dbReference>
<dbReference type="PANTHER" id="PTHR30075">
    <property type="entry name" value="GLYCYL-TRNA SYNTHETASE"/>
    <property type="match status" value="1"/>
</dbReference>
<dbReference type="Pfam" id="PF05746">
    <property type="entry name" value="DALR_1"/>
    <property type="match status" value="1"/>
</dbReference>
<dbReference type="Pfam" id="PF02092">
    <property type="entry name" value="tRNA_synt_2f"/>
    <property type="match status" value="1"/>
</dbReference>
<dbReference type="PRINTS" id="PR01045">
    <property type="entry name" value="TRNASYNTHGB"/>
</dbReference>
<dbReference type="SUPFAM" id="SSF109604">
    <property type="entry name" value="HD-domain/PDEase-like"/>
    <property type="match status" value="1"/>
</dbReference>
<dbReference type="PROSITE" id="PS50861">
    <property type="entry name" value="AA_TRNA_LIGASE_II_GLYAB"/>
    <property type="match status" value="1"/>
</dbReference>
<evidence type="ECO:0000250" key="1"/>
<evidence type="ECO:0000305" key="2"/>